<protein>
    <recommendedName>
        <fullName>Threonine synthase</fullName>
        <shortName>TS</shortName>
        <ecNumber>4.2.3.1</ecNumber>
    </recommendedName>
</protein>
<organism>
    <name type="scientific">Buchnera aphidicola subsp. Baizongia pistaciae (strain Bp)</name>
    <dbReference type="NCBI Taxonomy" id="224915"/>
    <lineage>
        <taxon>Bacteria</taxon>
        <taxon>Pseudomonadati</taxon>
        <taxon>Pseudomonadota</taxon>
        <taxon>Gammaproteobacteria</taxon>
        <taxon>Enterobacterales</taxon>
        <taxon>Erwiniaceae</taxon>
        <taxon>Buchnera</taxon>
    </lineage>
</organism>
<keyword id="KW-0028">Amino-acid biosynthesis</keyword>
<keyword id="KW-0456">Lyase</keyword>
<keyword id="KW-0663">Pyridoxal phosphate</keyword>
<keyword id="KW-1185">Reference proteome</keyword>
<keyword id="KW-0791">Threonine biosynthesis</keyword>
<dbReference type="EC" id="4.2.3.1"/>
<dbReference type="EMBL" id="AE016826">
    <property type="protein sequence ID" value="AAO26913.1"/>
    <property type="molecule type" value="Genomic_DNA"/>
</dbReference>
<dbReference type="RefSeq" id="WP_011091314.1">
    <property type="nucleotide sequence ID" value="NC_004545.1"/>
</dbReference>
<dbReference type="SMR" id="Q89AR5"/>
<dbReference type="STRING" id="224915.bbp_181"/>
<dbReference type="KEGG" id="bab:bbp_181"/>
<dbReference type="eggNOG" id="COG0498">
    <property type="taxonomic scope" value="Bacteria"/>
</dbReference>
<dbReference type="HOGENOM" id="CLU_015170_0_0_6"/>
<dbReference type="OrthoDB" id="9763107at2"/>
<dbReference type="UniPathway" id="UPA00050">
    <property type="reaction ID" value="UER00065"/>
</dbReference>
<dbReference type="Proteomes" id="UP000000601">
    <property type="component" value="Chromosome"/>
</dbReference>
<dbReference type="GO" id="GO:0030170">
    <property type="term" value="F:pyridoxal phosphate binding"/>
    <property type="evidence" value="ECO:0007669"/>
    <property type="project" value="InterPro"/>
</dbReference>
<dbReference type="GO" id="GO:0004795">
    <property type="term" value="F:threonine synthase activity"/>
    <property type="evidence" value="ECO:0007669"/>
    <property type="project" value="UniProtKB-EC"/>
</dbReference>
<dbReference type="GO" id="GO:0009088">
    <property type="term" value="P:threonine biosynthetic process"/>
    <property type="evidence" value="ECO:0007669"/>
    <property type="project" value="UniProtKB-UniPathway"/>
</dbReference>
<dbReference type="FunFam" id="3.40.50.1100:FF:000022">
    <property type="entry name" value="Threonine synthase"/>
    <property type="match status" value="1"/>
</dbReference>
<dbReference type="Gene3D" id="3.40.50.1100">
    <property type="match status" value="2"/>
</dbReference>
<dbReference type="Gene3D" id="3.90.1380.10">
    <property type="entry name" value="Threonine synthase, N-terminal domain"/>
    <property type="match status" value="1"/>
</dbReference>
<dbReference type="InterPro" id="IPR000634">
    <property type="entry name" value="Ser/Thr_deHydtase_PyrdxlP-BS"/>
</dbReference>
<dbReference type="InterPro" id="IPR029144">
    <property type="entry name" value="Thr_synth_N"/>
</dbReference>
<dbReference type="InterPro" id="IPR037158">
    <property type="entry name" value="Thr_synth_N_sf"/>
</dbReference>
<dbReference type="InterPro" id="IPR004450">
    <property type="entry name" value="Thr_synthase-like"/>
</dbReference>
<dbReference type="InterPro" id="IPR051166">
    <property type="entry name" value="Threonine_Synthase"/>
</dbReference>
<dbReference type="InterPro" id="IPR001926">
    <property type="entry name" value="TrpB-like_PALP"/>
</dbReference>
<dbReference type="InterPro" id="IPR036052">
    <property type="entry name" value="TrpB-like_PALP_sf"/>
</dbReference>
<dbReference type="NCBIfam" id="TIGR00260">
    <property type="entry name" value="thrC"/>
    <property type="match status" value="1"/>
</dbReference>
<dbReference type="PANTHER" id="PTHR42690">
    <property type="entry name" value="THREONINE SYNTHASE FAMILY MEMBER"/>
    <property type="match status" value="1"/>
</dbReference>
<dbReference type="PANTHER" id="PTHR42690:SF1">
    <property type="entry name" value="THREONINE SYNTHASE-LIKE 2"/>
    <property type="match status" value="1"/>
</dbReference>
<dbReference type="Pfam" id="PF00291">
    <property type="entry name" value="PALP"/>
    <property type="match status" value="1"/>
</dbReference>
<dbReference type="Pfam" id="PF14821">
    <property type="entry name" value="Thr_synth_N"/>
    <property type="match status" value="1"/>
</dbReference>
<dbReference type="SUPFAM" id="SSF53686">
    <property type="entry name" value="Tryptophan synthase beta subunit-like PLP-dependent enzymes"/>
    <property type="match status" value="1"/>
</dbReference>
<dbReference type="PROSITE" id="PS00165">
    <property type="entry name" value="DEHYDRATASE_SER_THR"/>
    <property type="match status" value="1"/>
</dbReference>
<comment type="function">
    <text evidence="1">Catalyzes the gamma-elimination of phosphate from L-phosphohomoserine and the beta-addition of water to produce L-threonine.</text>
</comment>
<comment type="catalytic activity">
    <reaction>
        <text>O-phospho-L-homoserine + H2O = L-threonine + phosphate</text>
        <dbReference type="Rhea" id="RHEA:10840"/>
        <dbReference type="ChEBI" id="CHEBI:15377"/>
        <dbReference type="ChEBI" id="CHEBI:43474"/>
        <dbReference type="ChEBI" id="CHEBI:57590"/>
        <dbReference type="ChEBI" id="CHEBI:57926"/>
        <dbReference type="EC" id="4.2.3.1"/>
    </reaction>
</comment>
<comment type="cofactor">
    <cofactor evidence="1">
        <name>pyridoxal 5'-phosphate</name>
        <dbReference type="ChEBI" id="CHEBI:597326"/>
    </cofactor>
</comment>
<comment type="pathway">
    <text>Amino-acid biosynthesis; L-threonine biosynthesis; L-threonine from L-aspartate: step 5/5.</text>
</comment>
<comment type="similarity">
    <text evidence="2">Belongs to the threonine synthase family.</text>
</comment>
<name>THRC_BUCBP</name>
<sequence length="430" mass="48632">MKLYNLKKKQDQVNFSKAVKLGLGKNQGLFFPKELPILTKEQLYKLLKMDFLTRSSKILSMFIGDEIHYSELTKRIKNAFSFTTPKIVSISKNIACFELFHGPTLAFKDFGARFMAQILSFLNHDKNDTITILTATSGDTGAAVAHAFFKMKNVRVIILYPKGKISELQEKLFCTLGENIITIAVNGSFDECQKLVKQAFNDDQLRIETGLNSANSINISRLLAQICYYFEAFALLTKKQQKNLVISVPCGNFGNLTAGLLAKALGLPIKSFIASTNSNDTVPRFLKTGFWKPNNTVSTISNAMDISQPNNWPRVEELFKRKFWSLKTLKYGSVSDILTKKSLKKLAFLGYVSEPHAAVAYYTLKNKLKQNEFGLFLGTAHPAKFKKTIEKILQITLFLPSKLRNQIKLPLLSHNIRPDFSKLKKFLLEK</sequence>
<evidence type="ECO:0000250" key="1"/>
<evidence type="ECO:0000305" key="2"/>
<feature type="chain" id="PRO_0000185629" description="Threonine synthase">
    <location>
        <begin position="1"/>
        <end position="430"/>
    </location>
</feature>
<feature type="modified residue" description="N6-(pyridoxal phosphate)lysine" evidence="1">
    <location>
        <position position="108"/>
    </location>
</feature>
<proteinExistence type="inferred from homology"/>
<accession>Q89AR5</accession>
<reference key="1">
    <citation type="journal article" date="2003" name="Proc. Natl. Acad. Sci. U.S.A.">
        <title>Reductive genome evolution in Buchnera aphidicola.</title>
        <authorList>
            <person name="van Ham R.C.H.J."/>
            <person name="Kamerbeek J."/>
            <person name="Palacios C."/>
            <person name="Rausell C."/>
            <person name="Abascal F."/>
            <person name="Bastolla U."/>
            <person name="Fernandez J.M."/>
            <person name="Jimenez L."/>
            <person name="Postigo M."/>
            <person name="Silva F.J."/>
            <person name="Tamames J."/>
            <person name="Viguera E."/>
            <person name="Latorre A."/>
            <person name="Valencia A."/>
            <person name="Moran F."/>
            <person name="Moya A."/>
        </authorList>
    </citation>
    <scope>NUCLEOTIDE SEQUENCE [LARGE SCALE GENOMIC DNA]</scope>
    <source>
        <strain>Bp</strain>
    </source>
</reference>
<gene>
    <name type="primary">thrC</name>
    <name type="ordered locus">bbp_181</name>
</gene>